<gene>
    <name type="primary">TMEM235</name>
</gene>
<feature type="signal peptide" evidence="2">
    <location>
        <begin position="1"/>
        <end position="28"/>
    </location>
</feature>
<feature type="chain" id="PRO_0000406902" description="Transmembrane protein 235">
    <location>
        <begin position="29"/>
        <end position="223"/>
    </location>
</feature>
<feature type="transmembrane region" description="Helical" evidence="2">
    <location>
        <begin position="96"/>
        <end position="116"/>
    </location>
</feature>
<feature type="transmembrane region" description="Helical" evidence="2">
    <location>
        <begin position="126"/>
        <end position="146"/>
    </location>
</feature>
<feature type="transmembrane region" description="Helical" evidence="2">
    <location>
        <begin position="176"/>
        <end position="196"/>
    </location>
</feature>
<feature type="glycosylation site" description="N-linked (GlcNAc...) asparagine" evidence="2">
    <location>
        <position position="41"/>
    </location>
</feature>
<feature type="splice variant" id="VSP_040887" description="In isoform 2." evidence="4">
    <original>GQNGCIPLVDPFASESLDVSTSVQHLIL</original>
    <variation>V</variation>
    <location>
        <begin position="64"/>
        <end position="91"/>
    </location>
</feature>
<feature type="splice variant" id="VSP_040888" description="In isoform 3." evidence="4">
    <location>
        <begin position="65"/>
        <end position="137"/>
    </location>
</feature>
<dbReference type="EMBL" id="AC087645">
    <property type="status" value="NOT_ANNOTATED_CDS"/>
    <property type="molecule type" value="Genomic_DNA"/>
</dbReference>
<dbReference type="EMBL" id="CH471099">
    <property type="protein sequence ID" value="EAW89517.1"/>
    <property type="status" value="ALT_SEQ"/>
    <property type="molecule type" value="Genomic_DNA"/>
</dbReference>
<dbReference type="EMBL" id="BC042066">
    <property type="status" value="NOT_ANNOTATED_CDS"/>
    <property type="molecule type" value="mRNA"/>
</dbReference>
<dbReference type="EMBL" id="BM907084">
    <property type="status" value="NOT_ANNOTATED_CDS"/>
    <property type="molecule type" value="mRNA"/>
</dbReference>
<dbReference type="CCDS" id="CCDS56046.1">
    <molecule id="A6NFC5-1"/>
</dbReference>
<dbReference type="CCDS" id="CCDS56047.1">
    <molecule id="A6NFC5-2"/>
</dbReference>
<dbReference type="CCDS" id="CCDS56048.1">
    <molecule id="A6NFC5-3"/>
</dbReference>
<dbReference type="RefSeq" id="NP_001191139.1">
    <molecule id="A6NFC5-1"/>
    <property type="nucleotide sequence ID" value="NM_001204210.2"/>
</dbReference>
<dbReference type="RefSeq" id="NP_001191140.1">
    <molecule id="A6NFC5-2"/>
    <property type="nucleotide sequence ID" value="NM_001204211.2"/>
</dbReference>
<dbReference type="RefSeq" id="NP_001191141.1">
    <molecule id="A6NFC5-3"/>
    <property type="nucleotide sequence ID" value="NM_001204212.2"/>
</dbReference>
<dbReference type="RefSeq" id="NP_001382432.1">
    <molecule id="A6NFC5-1"/>
    <property type="nucleotide sequence ID" value="NM_001395503.1"/>
</dbReference>
<dbReference type="SMR" id="A6NFC5"/>
<dbReference type="FunCoup" id="A6NFC5">
    <property type="interactions" value="4"/>
</dbReference>
<dbReference type="STRING" id="9606.ENSP00000402790"/>
<dbReference type="GlyCosmos" id="A6NFC5">
    <property type="glycosylation" value="1 site, No reported glycans"/>
</dbReference>
<dbReference type="GlyGen" id="A6NFC5">
    <property type="glycosylation" value="1 site"/>
</dbReference>
<dbReference type="BioMuta" id="TMEM235"/>
<dbReference type="MassIVE" id="A6NFC5"/>
<dbReference type="PaxDb" id="9606-ENSP00000402790"/>
<dbReference type="PeptideAtlas" id="A6NFC5"/>
<dbReference type="ProteomicsDB" id="1038">
    <molecule id="A6NFC5-1"/>
</dbReference>
<dbReference type="ProteomicsDB" id="1039">
    <molecule id="A6NFC5-2"/>
</dbReference>
<dbReference type="ProteomicsDB" id="1040">
    <molecule id="A6NFC5-3"/>
</dbReference>
<dbReference type="Antibodypedia" id="64790">
    <property type="antibodies" value="5 antibodies from 5 providers"/>
</dbReference>
<dbReference type="DNASU" id="283999"/>
<dbReference type="Ensembl" id="ENST00000421688.7">
    <molecule id="A6NFC5-1"/>
    <property type="protein sequence ID" value="ENSP00000402790.2"/>
    <property type="gene ID" value="ENSG00000204278.14"/>
</dbReference>
<dbReference type="Ensembl" id="ENST00000550981.7">
    <molecule id="A6NFC5-2"/>
    <property type="protein sequence ID" value="ENSP00000447766.3"/>
    <property type="gene ID" value="ENSG00000204278.14"/>
</dbReference>
<dbReference type="Ensembl" id="ENST00000586400.5">
    <molecule id="A6NFC5-3"/>
    <property type="protein sequence ID" value="ENSP00000466793.1"/>
    <property type="gene ID" value="ENSG00000204278.14"/>
</dbReference>
<dbReference type="GeneID" id="283999"/>
<dbReference type="KEGG" id="hsa:283999"/>
<dbReference type="MANE-Select" id="ENST00000421688.7">
    <property type="protein sequence ID" value="ENSP00000402790.2"/>
    <property type="RefSeq nucleotide sequence ID" value="NM_001395503.1"/>
    <property type="RefSeq protein sequence ID" value="NP_001382432.1"/>
</dbReference>
<dbReference type="UCSC" id="uc002jvk.4">
    <molecule id="A6NFC5-1"/>
    <property type="organism name" value="human"/>
</dbReference>
<dbReference type="AGR" id="HGNC:27563"/>
<dbReference type="CTD" id="283999"/>
<dbReference type="DisGeNET" id="283999"/>
<dbReference type="GeneCards" id="TMEM235"/>
<dbReference type="HGNC" id="HGNC:27563">
    <property type="gene designation" value="TMEM235"/>
</dbReference>
<dbReference type="HPA" id="ENSG00000204278">
    <property type="expression patterns" value="Group enriched (brain, choroid plexus)"/>
</dbReference>
<dbReference type="MIM" id="620272">
    <property type="type" value="gene"/>
</dbReference>
<dbReference type="neXtProt" id="NX_A6NFC5"/>
<dbReference type="OpenTargets" id="ENSG00000204278"/>
<dbReference type="VEuPathDB" id="HostDB:ENSG00000204278"/>
<dbReference type="eggNOG" id="ENOG502S049">
    <property type="taxonomic scope" value="Eukaryota"/>
</dbReference>
<dbReference type="GeneTree" id="ENSGT00390000011615"/>
<dbReference type="HOGENOM" id="CLU_102991_0_0_1"/>
<dbReference type="InParanoid" id="A6NFC5"/>
<dbReference type="OMA" id="LWRTCEG"/>
<dbReference type="OrthoDB" id="9626630at2759"/>
<dbReference type="PAN-GO" id="A6NFC5">
    <property type="GO annotations" value="1 GO annotation based on evolutionary models"/>
</dbReference>
<dbReference type="PhylomeDB" id="A6NFC5"/>
<dbReference type="PathwayCommons" id="A6NFC5"/>
<dbReference type="BioGRID-ORCS" id="283999">
    <property type="hits" value="25 hits in 1155 CRISPR screens"/>
</dbReference>
<dbReference type="GenomeRNAi" id="283999"/>
<dbReference type="Pharos" id="A6NFC5">
    <property type="development level" value="Tdark"/>
</dbReference>
<dbReference type="PRO" id="PR:A6NFC5"/>
<dbReference type="Proteomes" id="UP000005640">
    <property type="component" value="Chromosome 17"/>
</dbReference>
<dbReference type="RNAct" id="A6NFC5">
    <property type="molecule type" value="protein"/>
</dbReference>
<dbReference type="Bgee" id="ENSG00000204278">
    <property type="expression patterns" value="Expressed in C1 segment of cervical spinal cord and 52 other cell types or tissues"/>
</dbReference>
<dbReference type="ExpressionAtlas" id="A6NFC5">
    <property type="expression patterns" value="baseline and differential"/>
</dbReference>
<dbReference type="GO" id="GO:0016324">
    <property type="term" value="C:apical plasma membrane"/>
    <property type="evidence" value="ECO:0000318"/>
    <property type="project" value="GO_Central"/>
</dbReference>
<dbReference type="GO" id="GO:0005783">
    <property type="term" value="C:endoplasmic reticulum"/>
    <property type="evidence" value="ECO:0007669"/>
    <property type="project" value="UniProtKB-SubCell"/>
</dbReference>
<dbReference type="FunFam" id="1.20.140.150:FF:000021">
    <property type="entry name" value="Transmembrane protein 114"/>
    <property type="match status" value="1"/>
</dbReference>
<dbReference type="Gene3D" id="1.20.140.150">
    <property type="match status" value="1"/>
</dbReference>
<dbReference type="InterPro" id="IPR004031">
    <property type="entry name" value="PMP22/EMP/MP20/Claudin"/>
</dbReference>
<dbReference type="InterPro" id="IPR039951">
    <property type="entry name" value="TMEM114/TMEM235"/>
</dbReference>
<dbReference type="PANTHER" id="PTHR20516">
    <property type="entry name" value="TRANSMEMBRANE PROTEIN 114/235 FAMILY MEMBER"/>
    <property type="match status" value="1"/>
</dbReference>
<dbReference type="PANTHER" id="PTHR20516:SF1">
    <property type="entry name" value="TRANSMEMBRANE PROTEIN 235"/>
    <property type="match status" value="1"/>
</dbReference>
<dbReference type="Pfam" id="PF13903">
    <property type="entry name" value="Claudin_2"/>
    <property type="match status" value="1"/>
</dbReference>
<dbReference type="PRINTS" id="PR01077">
    <property type="entry name" value="CLAUDIN"/>
</dbReference>
<evidence type="ECO:0000250" key="1">
    <source>
        <dbReference type="UniProtKB" id="B1AQL3"/>
    </source>
</evidence>
<evidence type="ECO:0000255" key="2"/>
<evidence type="ECO:0000269" key="3">
    <source>
    </source>
</evidence>
<evidence type="ECO:0000303" key="4">
    <source>
    </source>
</evidence>
<evidence type="ECO:0000303" key="5">
    <source>
    </source>
</evidence>
<evidence type="ECO:0000305" key="6"/>
<comment type="subcellular location">
    <subcellularLocation>
        <location evidence="6">Membrane</location>
        <topology evidence="6">Multi-pass membrane protein</topology>
    </subcellularLocation>
    <subcellularLocation>
        <location evidence="6">Endoplasmic reticulum</location>
    </subcellularLocation>
</comment>
<comment type="alternative products">
    <event type="alternative splicing"/>
    <isoform>
        <id>A6NFC5-1</id>
        <name>1</name>
        <sequence type="displayed"/>
    </isoform>
    <isoform>
        <id>A6NFC5-2</id>
        <name>2</name>
        <sequence type="described" ref="VSP_040887"/>
    </isoform>
    <isoform>
        <id>A6NFC5-3</id>
        <name>3</name>
        <sequence type="described" ref="VSP_040888"/>
    </isoform>
</comment>
<comment type="developmental stage">
    <text evidence="3">Not detected before gestational days 53-54. Expressed in the eye at gestational week 10.</text>
</comment>
<comment type="PTM">
    <text evidence="1">N-glycosylated.</text>
</comment>
<comment type="similarity">
    <text evidence="6">Belongs to the PMP-22/EMP/MP20 family.</text>
</comment>
<comment type="sequence caution" evidence="6">
    <conflict type="erroneous gene model prediction">
        <sequence resource="EMBL-CDS" id="EAW89517"/>
    </conflict>
</comment>
<organism>
    <name type="scientific">Homo sapiens</name>
    <name type="common">Human</name>
    <dbReference type="NCBI Taxonomy" id="9606"/>
    <lineage>
        <taxon>Eukaryota</taxon>
        <taxon>Metazoa</taxon>
        <taxon>Chordata</taxon>
        <taxon>Craniata</taxon>
        <taxon>Vertebrata</taxon>
        <taxon>Euteleostomi</taxon>
        <taxon>Mammalia</taxon>
        <taxon>Eutheria</taxon>
        <taxon>Euarchontoglires</taxon>
        <taxon>Primates</taxon>
        <taxon>Haplorrhini</taxon>
        <taxon>Catarrhini</taxon>
        <taxon>Hominidae</taxon>
        <taxon>Homo</taxon>
    </lineage>
</organism>
<name>TM235_HUMAN</name>
<accession>A6NFC5</accession>
<accession>C9JRE6</accession>
<keyword id="KW-0025">Alternative splicing</keyword>
<keyword id="KW-0256">Endoplasmic reticulum</keyword>
<keyword id="KW-0325">Glycoprotein</keyword>
<keyword id="KW-0472">Membrane</keyword>
<keyword id="KW-1185">Reference proteome</keyword>
<keyword id="KW-0732">Signal</keyword>
<keyword id="KW-0812">Transmembrane</keyword>
<keyword id="KW-1133">Transmembrane helix</keyword>
<reference key="1">
    <citation type="journal article" date="2006" name="Nature">
        <title>DNA sequence of human chromosome 17 and analysis of rearrangement in the human lineage.</title>
        <authorList>
            <person name="Zody M.C."/>
            <person name="Garber M."/>
            <person name="Adams D.J."/>
            <person name="Sharpe T."/>
            <person name="Harrow J."/>
            <person name="Lupski J.R."/>
            <person name="Nicholson C."/>
            <person name="Searle S.M."/>
            <person name="Wilming L."/>
            <person name="Young S.K."/>
            <person name="Abouelleil A."/>
            <person name="Allen N.R."/>
            <person name="Bi W."/>
            <person name="Bloom T."/>
            <person name="Borowsky M.L."/>
            <person name="Bugalter B.E."/>
            <person name="Butler J."/>
            <person name="Chang J.L."/>
            <person name="Chen C.-K."/>
            <person name="Cook A."/>
            <person name="Corum B."/>
            <person name="Cuomo C.A."/>
            <person name="de Jong P.J."/>
            <person name="DeCaprio D."/>
            <person name="Dewar K."/>
            <person name="FitzGerald M."/>
            <person name="Gilbert J."/>
            <person name="Gibson R."/>
            <person name="Gnerre S."/>
            <person name="Goldstein S."/>
            <person name="Grafham D.V."/>
            <person name="Grocock R."/>
            <person name="Hafez N."/>
            <person name="Hagopian D.S."/>
            <person name="Hart E."/>
            <person name="Norman C.H."/>
            <person name="Humphray S."/>
            <person name="Jaffe D.B."/>
            <person name="Jones M."/>
            <person name="Kamal M."/>
            <person name="Khodiyar V.K."/>
            <person name="LaButti K."/>
            <person name="Laird G."/>
            <person name="Lehoczky J."/>
            <person name="Liu X."/>
            <person name="Lokyitsang T."/>
            <person name="Loveland J."/>
            <person name="Lui A."/>
            <person name="Macdonald P."/>
            <person name="Major J.E."/>
            <person name="Matthews L."/>
            <person name="Mauceli E."/>
            <person name="McCarroll S.A."/>
            <person name="Mihalev A.H."/>
            <person name="Mudge J."/>
            <person name="Nguyen C."/>
            <person name="Nicol R."/>
            <person name="O'Leary S.B."/>
            <person name="Osoegawa K."/>
            <person name="Schwartz D.C."/>
            <person name="Shaw-Smith C."/>
            <person name="Stankiewicz P."/>
            <person name="Steward C."/>
            <person name="Swarbreck D."/>
            <person name="Venkataraman V."/>
            <person name="Whittaker C.A."/>
            <person name="Yang X."/>
            <person name="Zimmer A.R."/>
            <person name="Bradley A."/>
            <person name="Hubbard T."/>
            <person name="Birren B.W."/>
            <person name="Rogers J."/>
            <person name="Lander E.S."/>
            <person name="Nusbaum C."/>
        </authorList>
    </citation>
    <scope>NUCLEOTIDE SEQUENCE [LARGE SCALE GENOMIC DNA]</scope>
</reference>
<reference key="2">
    <citation type="journal article" date="2004" name="Genome Res.">
        <title>The status, quality, and expansion of the NIH full-length cDNA project: the Mammalian Gene Collection (MGC).</title>
        <authorList>
            <consortium name="The MGC Project Team"/>
        </authorList>
    </citation>
    <scope>NUCLEOTIDE SEQUENCE [LARGE SCALE MRNA] (ISOFORM 3)</scope>
    <scope>NUCLEOTIDE SEQUENCE [LARGE SCALE MRNA] OF 3-223 (ISOFORM 2)</scope>
</reference>
<reference key="3">
    <citation type="journal article" date="2011" name="FEBS Lett.">
        <title>Predicted expansion of the claudin multigene family.</title>
        <authorList>
            <person name="Mineta K."/>
            <person name="Yamamoto Y."/>
            <person name="Yamazaki Y."/>
            <person name="Tanaka H."/>
            <person name="Tada Y."/>
            <person name="Saito K."/>
            <person name="Tamura A."/>
            <person name="Igarashi M."/>
            <person name="Endo T."/>
            <person name="Takeuchi K."/>
            <person name="Tsukita S."/>
        </authorList>
    </citation>
    <scope>IDENTIFICATION</scope>
</reference>
<reference key="4">
    <citation type="journal article" date="2011" name="FEBS Lett.">
        <title>The cataract-associated protein TMEM114, and TMEM235, are glycosylated transmembrane proteins that are distinct from claudin family members.</title>
        <authorList>
            <person name="Maher G.J."/>
            <person name="Hilton E.N."/>
            <person name="Urquhart J.E."/>
            <person name="Davidson A.E."/>
            <person name="Spencer H.L."/>
            <person name="Black G.C."/>
            <person name="Manson F.D."/>
        </authorList>
    </citation>
    <scope>DEVELOPMENTAL STAGE</scope>
</reference>
<protein>
    <recommendedName>
        <fullName>Transmembrane protein 235</fullName>
    </recommendedName>
    <alternativeName>
        <fullName evidence="5">Claudin-27</fullName>
    </alternativeName>
</protein>
<proteinExistence type="evidence at transcript level"/>
<sequence>MARLGALLLAAALGALLSFALLAAAVASDYWYILEVADAGNGSAWPGRAELLSSHSGLWRICEGQNGCIPLVDPFASESLDVSTSVQHLILLHRAVIVVLPLSLVLLVCGWICGLLSSLAQSVSLLLFTGCYFLLGSVLTLAGVSIYISYSHLAFAETVQQYGPQHMQGVRVSFGWSMALAWGSCALEAFSGTLLLSAAWTLSLSPPICGHLSPQQVGGRGGD</sequence>